<comment type="function">
    <text evidence="1">Participates in the translocation of lipoproteins from the inner membrane to the outer membrane. Only forms a complex with a lipoprotein if the residue after the N-terminal Cys is not an aspartate (The Asp acts as a targeting signal to indicate that the lipoprotein should stay in the inner membrane).</text>
</comment>
<comment type="subunit">
    <text evidence="1">Monomer.</text>
</comment>
<comment type="subcellular location">
    <subcellularLocation>
        <location evidence="1">Periplasm</location>
    </subcellularLocation>
</comment>
<comment type="similarity">
    <text evidence="1">Belongs to the LolA family.</text>
</comment>
<feature type="signal peptide" evidence="1">
    <location>
        <begin position="1"/>
        <end position="21"/>
    </location>
</feature>
<feature type="chain" id="PRO_1000005702" description="Outer-membrane lipoprotein carrier protein">
    <location>
        <begin position="22"/>
        <end position="208"/>
    </location>
</feature>
<name>LOLA_PSEAB</name>
<evidence type="ECO:0000255" key="1">
    <source>
        <dbReference type="HAMAP-Rule" id="MF_00240"/>
    </source>
</evidence>
<gene>
    <name evidence="1" type="primary">lolA</name>
    <name type="ordered locus">PA14_30310</name>
</gene>
<protein>
    <recommendedName>
        <fullName evidence="1">Outer-membrane lipoprotein carrier protein</fullName>
    </recommendedName>
</protein>
<accession>Q02NA6</accession>
<sequence length="208" mass="23072">MRLIRTLFVAALAMGASLAHADDSAAVQRLTGLLNKAQTLTARFSQLTLDGSGTRLQETAGQLSLKRPGLFRWHTDAPNEQLLISNGEKVWLYDPDLEQVTIQKLDQRLTQTPALLLSGDISKISESFAITYKEGGNVVDFVLKPKTKDTLFDTLRLSFRSGKVNDMQMIDGVGQRTNILFFDVKMNEALDAKQFTFDVPPGVDVIQE</sequence>
<dbReference type="EMBL" id="CP000438">
    <property type="protein sequence ID" value="ABJ11837.1"/>
    <property type="molecule type" value="Genomic_DNA"/>
</dbReference>
<dbReference type="RefSeq" id="WP_003090414.1">
    <property type="nucleotide sequence ID" value="NZ_CP034244.1"/>
</dbReference>
<dbReference type="SMR" id="Q02NA6"/>
<dbReference type="GeneID" id="77220849"/>
<dbReference type="KEGG" id="pau:PA14_30310"/>
<dbReference type="PseudoCAP" id="PA14_30310"/>
<dbReference type="HOGENOM" id="CLU_087560_0_0_6"/>
<dbReference type="BioCyc" id="PAER208963:G1G74-2537-MONOMER"/>
<dbReference type="PHI-base" id="PHI:5442"/>
<dbReference type="Proteomes" id="UP000000653">
    <property type="component" value="Chromosome"/>
</dbReference>
<dbReference type="GO" id="GO:0030288">
    <property type="term" value="C:outer membrane-bounded periplasmic space"/>
    <property type="evidence" value="ECO:0007669"/>
    <property type="project" value="TreeGrafter"/>
</dbReference>
<dbReference type="GO" id="GO:0044874">
    <property type="term" value="P:lipoprotein localization to outer membrane"/>
    <property type="evidence" value="ECO:0007669"/>
    <property type="project" value="UniProtKB-UniRule"/>
</dbReference>
<dbReference type="GO" id="GO:0042953">
    <property type="term" value="P:lipoprotein transport"/>
    <property type="evidence" value="ECO:0007669"/>
    <property type="project" value="InterPro"/>
</dbReference>
<dbReference type="CDD" id="cd16325">
    <property type="entry name" value="LolA"/>
    <property type="match status" value="1"/>
</dbReference>
<dbReference type="FunFam" id="2.50.20.10:FF:000007">
    <property type="entry name" value="Outer-membrane lipoprotein carrier protein"/>
    <property type="match status" value="1"/>
</dbReference>
<dbReference type="Gene3D" id="2.50.20.10">
    <property type="entry name" value="Lipoprotein localisation LolA/LolB/LppX"/>
    <property type="match status" value="1"/>
</dbReference>
<dbReference type="HAMAP" id="MF_00240">
    <property type="entry name" value="LolA"/>
    <property type="match status" value="1"/>
</dbReference>
<dbReference type="InterPro" id="IPR029046">
    <property type="entry name" value="LolA/LolB/LppX"/>
</dbReference>
<dbReference type="InterPro" id="IPR004564">
    <property type="entry name" value="OM_lipoprot_carrier_LolA-like"/>
</dbReference>
<dbReference type="InterPro" id="IPR018323">
    <property type="entry name" value="OM_lipoprot_carrier_LolA_Pbac"/>
</dbReference>
<dbReference type="NCBIfam" id="TIGR00547">
    <property type="entry name" value="lolA"/>
    <property type="match status" value="1"/>
</dbReference>
<dbReference type="PANTHER" id="PTHR35869">
    <property type="entry name" value="OUTER-MEMBRANE LIPOPROTEIN CARRIER PROTEIN"/>
    <property type="match status" value="1"/>
</dbReference>
<dbReference type="PANTHER" id="PTHR35869:SF1">
    <property type="entry name" value="OUTER-MEMBRANE LIPOPROTEIN CARRIER PROTEIN"/>
    <property type="match status" value="1"/>
</dbReference>
<dbReference type="Pfam" id="PF03548">
    <property type="entry name" value="LolA"/>
    <property type="match status" value="1"/>
</dbReference>
<dbReference type="SUPFAM" id="SSF89392">
    <property type="entry name" value="Prokaryotic lipoproteins and lipoprotein localization factors"/>
    <property type="match status" value="1"/>
</dbReference>
<proteinExistence type="inferred from homology"/>
<keyword id="KW-0143">Chaperone</keyword>
<keyword id="KW-0574">Periplasm</keyword>
<keyword id="KW-0653">Protein transport</keyword>
<keyword id="KW-0732">Signal</keyword>
<keyword id="KW-0813">Transport</keyword>
<organism>
    <name type="scientific">Pseudomonas aeruginosa (strain UCBPP-PA14)</name>
    <dbReference type="NCBI Taxonomy" id="208963"/>
    <lineage>
        <taxon>Bacteria</taxon>
        <taxon>Pseudomonadati</taxon>
        <taxon>Pseudomonadota</taxon>
        <taxon>Gammaproteobacteria</taxon>
        <taxon>Pseudomonadales</taxon>
        <taxon>Pseudomonadaceae</taxon>
        <taxon>Pseudomonas</taxon>
    </lineage>
</organism>
<reference key="1">
    <citation type="journal article" date="2006" name="Genome Biol.">
        <title>Genomic analysis reveals that Pseudomonas aeruginosa virulence is combinatorial.</title>
        <authorList>
            <person name="Lee D.G."/>
            <person name="Urbach J.M."/>
            <person name="Wu G."/>
            <person name="Liberati N.T."/>
            <person name="Feinbaum R.L."/>
            <person name="Miyata S."/>
            <person name="Diggins L.T."/>
            <person name="He J."/>
            <person name="Saucier M."/>
            <person name="Deziel E."/>
            <person name="Friedman L."/>
            <person name="Li L."/>
            <person name="Grills G."/>
            <person name="Montgomery K."/>
            <person name="Kucherlapati R."/>
            <person name="Rahme L.G."/>
            <person name="Ausubel F.M."/>
        </authorList>
    </citation>
    <scope>NUCLEOTIDE SEQUENCE [LARGE SCALE GENOMIC DNA]</scope>
    <source>
        <strain>UCBPP-PA14</strain>
    </source>
</reference>